<reference key="1">
    <citation type="journal article" date="2003" name="Plant Syst. Evol.">
        <title>An integrated molecular and morphological study of the subfamily Suaedoideae Ulbr. (Chenopodiaceae).</title>
        <authorList>
            <person name="Schuetze P."/>
            <person name="Freitag H."/>
            <person name="Weising K."/>
        </authorList>
    </citation>
    <scope>NUCLEOTIDE SEQUENCE [GENOMIC DNA]</scope>
</reference>
<comment type="function">
    <text evidence="1">Found at the monomer-monomer interface of the photosystem II (PS II) dimer, plays a role in assembly and dimerization of PSII. PSII is a light-driven water plastoquinone oxidoreductase, using light energy to abstract electrons from H(2)O, generating a proton gradient subsequently used for ATP formation.</text>
</comment>
<comment type="subunit">
    <text evidence="1">PSII is composed of 1 copy each of membrane proteins PsbA, PsbB, PsbC, PsbD, PsbE, PsbF, PsbH, PsbI, PsbJ, PsbK, PsbL, PsbM, PsbT, PsbY, PsbZ, Psb30/Ycf12, at least 3 peripheral proteins of the oxygen-evolving complex and a large number of cofactors. It forms dimeric complexes.</text>
</comment>
<comment type="subcellular location">
    <subcellularLocation>
        <location evidence="1">Plastid</location>
        <location evidence="1">Chloroplast thylakoid membrane</location>
        <topology evidence="1">Single-pass membrane protein</topology>
    </subcellularLocation>
</comment>
<comment type="similarity">
    <text evidence="1">Belongs to the PsbT family.</text>
</comment>
<evidence type="ECO:0000255" key="1">
    <source>
        <dbReference type="HAMAP-Rule" id="MF_00808"/>
    </source>
</evidence>
<accession>Q7YNT6</accession>
<geneLocation type="chloroplast"/>
<name>PSBT_SUAMA</name>
<proteinExistence type="inferred from homology"/>
<feature type="chain" id="PRO_0000217988" description="Photosystem II reaction center protein T">
    <location>
        <begin position="1"/>
        <end position="35"/>
    </location>
</feature>
<feature type="transmembrane region" description="Helical" evidence="1">
    <location>
        <begin position="3"/>
        <end position="23"/>
    </location>
</feature>
<keyword id="KW-0150">Chloroplast</keyword>
<keyword id="KW-0472">Membrane</keyword>
<keyword id="KW-0602">Photosynthesis</keyword>
<keyword id="KW-0604">Photosystem II</keyword>
<keyword id="KW-0934">Plastid</keyword>
<keyword id="KW-0793">Thylakoid</keyword>
<keyword id="KW-0812">Transmembrane</keyword>
<keyword id="KW-1133">Transmembrane helix</keyword>
<sequence length="35" mass="4122">MEALVYTFLLVSTLGIIFFAIFFREPPKIQTKKMK</sequence>
<protein>
    <recommendedName>
        <fullName evidence="1">Photosystem II reaction center protein T</fullName>
        <shortName evidence="1">PSII-T</shortName>
    </recommendedName>
</protein>
<dbReference type="EMBL" id="AY181883">
    <property type="protein sequence ID" value="AAO66007.1"/>
    <property type="molecule type" value="Genomic_DNA"/>
</dbReference>
<dbReference type="SMR" id="Q7YNT6"/>
<dbReference type="GO" id="GO:0009535">
    <property type="term" value="C:chloroplast thylakoid membrane"/>
    <property type="evidence" value="ECO:0007669"/>
    <property type="project" value="UniProtKB-SubCell"/>
</dbReference>
<dbReference type="GO" id="GO:0009539">
    <property type="term" value="C:photosystem II reaction center"/>
    <property type="evidence" value="ECO:0007669"/>
    <property type="project" value="InterPro"/>
</dbReference>
<dbReference type="GO" id="GO:0015979">
    <property type="term" value="P:photosynthesis"/>
    <property type="evidence" value="ECO:0007669"/>
    <property type="project" value="UniProtKB-UniRule"/>
</dbReference>
<dbReference type="HAMAP" id="MF_00808">
    <property type="entry name" value="PSII_PsbT"/>
    <property type="match status" value="1"/>
</dbReference>
<dbReference type="InterPro" id="IPR001743">
    <property type="entry name" value="PSII_PsbT"/>
</dbReference>
<dbReference type="InterPro" id="IPR037268">
    <property type="entry name" value="PSII_PsbT_sf"/>
</dbReference>
<dbReference type="PANTHER" id="PTHR36411">
    <property type="match status" value="1"/>
</dbReference>
<dbReference type="PANTHER" id="PTHR36411:SF2">
    <property type="entry name" value="PHOTOSYSTEM II REACTION CENTER PROTEIN T"/>
    <property type="match status" value="1"/>
</dbReference>
<dbReference type="Pfam" id="PF01405">
    <property type="entry name" value="PsbT"/>
    <property type="match status" value="1"/>
</dbReference>
<dbReference type="SUPFAM" id="SSF161029">
    <property type="entry name" value="Photosystem II reaction center protein T, PsbT"/>
    <property type="match status" value="1"/>
</dbReference>
<gene>
    <name evidence="1" type="primary">psbT</name>
</gene>
<organism>
    <name type="scientific">Suaeda maritima</name>
    <name type="common">Annual sea blite</name>
    <name type="synonym">Suaeda spicata</name>
    <dbReference type="NCBI Taxonomy" id="126913"/>
    <lineage>
        <taxon>Eukaryota</taxon>
        <taxon>Viridiplantae</taxon>
        <taxon>Streptophyta</taxon>
        <taxon>Embryophyta</taxon>
        <taxon>Tracheophyta</taxon>
        <taxon>Spermatophyta</taxon>
        <taxon>Magnoliopsida</taxon>
        <taxon>eudicotyledons</taxon>
        <taxon>Gunneridae</taxon>
        <taxon>Pentapetalae</taxon>
        <taxon>Caryophyllales</taxon>
        <taxon>Chenopodiaceae</taxon>
        <taxon>Suaedoideae</taxon>
        <taxon>Suaeda</taxon>
    </lineage>
</organism>